<proteinExistence type="evidence at protein level"/>
<reference key="1">
    <citation type="journal article" date="2003" name="Genome Res.">
        <title>Reevaluating human gene annotation: a second-generation analysis of chromosome 22.</title>
        <authorList>
            <person name="Collins J.E."/>
            <person name="Goward M.E."/>
            <person name="Cole C.G."/>
            <person name="Smink L.J."/>
            <person name="Huckle E.J."/>
            <person name="Knowles S."/>
            <person name="Bye J.M."/>
            <person name="Beare D.M."/>
            <person name="Dunham I."/>
        </authorList>
    </citation>
    <scope>NUCLEOTIDE SEQUENCE [LARGE SCALE MRNA] (ISOFORM 2)</scope>
</reference>
<reference key="2">
    <citation type="journal article" date="2004" name="Genome Biol.">
        <title>A genome annotation-driven approach to cloning the human ORFeome.</title>
        <authorList>
            <person name="Collins J.E."/>
            <person name="Wright C.L."/>
            <person name="Edwards C.A."/>
            <person name="Davis M.P."/>
            <person name="Grinham J.A."/>
            <person name="Cole C.G."/>
            <person name="Goward M.E."/>
            <person name="Aguado B."/>
            <person name="Mallya M."/>
            <person name="Mokrab Y."/>
            <person name="Huckle E.J."/>
            <person name="Beare D.M."/>
            <person name="Dunham I."/>
        </authorList>
    </citation>
    <scope>NUCLEOTIDE SEQUENCE [LARGE SCALE MRNA] (ISOFORM 1)</scope>
</reference>
<reference key="3">
    <citation type="submission" date="2003-05" db="EMBL/GenBank/DDBJ databases">
        <title>Cloning of human full-length CDSs in BD Creator(TM) system donor vector.</title>
        <authorList>
            <person name="Kalnine N."/>
            <person name="Chen X."/>
            <person name="Rolfs A."/>
            <person name="Halleck A."/>
            <person name="Hines L."/>
            <person name="Eisenstein S."/>
            <person name="Koundinya M."/>
            <person name="Raphael J."/>
            <person name="Moreira D."/>
            <person name="Kelley T."/>
            <person name="LaBaer J."/>
            <person name="Lin Y."/>
            <person name="Phelan M."/>
            <person name="Farmer A."/>
        </authorList>
    </citation>
    <scope>NUCLEOTIDE SEQUENCE [LARGE SCALE MRNA] (ISOFORM 1)</scope>
</reference>
<reference key="4">
    <citation type="journal article" date="1999" name="Nature">
        <title>The DNA sequence of human chromosome 22.</title>
        <authorList>
            <person name="Dunham I."/>
            <person name="Hunt A.R."/>
            <person name="Collins J.E."/>
            <person name="Bruskiewich R."/>
            <person name="Beare D.M."/>
            <person name="Clamp M."/>
            <person name="Smink L.J."/>
            <person name="Ainscough R."/>
            <person name="Almeida J.P."/>
            <person name="Babbage A.K."/>
            <person name="Bagguley C."/>
            <person name="Bailey J."/>
            <person name="Barlow K.F."/>
            <person name="Bates K.N."/>
            <person name="Beasley O.P."/>
            <person name="Bird C.P."/>
            <person name="Blakey S.E."/>
            <person name="Bridgeman A.M."/>
            <person name="Buck D."/>
            <person name="Burgess J."/>
            <person name="Burrill W.D."/>
            <person name="Burton J."/>
            <person name="Carder C."/>
            <person name="Carter N.P."/>
            <person name="Chen Y."/>
            <person name="Clark G."/>
            <person name="Clegg S.M."/>
            <person name="Cobley V.E."/>
            <person name="Cole C.G."/>
            <person name="Collier R.E."/>
            <person name="Connor R."/>
            <person name="Conroy D."/>
            <person name="Corby N.R."/>
            <person name="Coville G.J."/>
            <person name="Cox A.V."/>
            <person name="Davis J."/>
            <person name="Dawson E."/>
            <person name="Dhami P.D."/>
            <person name="Dockree C."/>
            <person name="Dodsworth S.J."/>
            <person name="Durbin R.M."/>
            <person name="Ellington A.G."/>
            <person name="Evans K.L."/>
            <person name="Fey J.M."/>
            <person name="Fleming K."/>
            <person name="French L."/>
            <person name="Garner A.A."/>
            <person name="Gilbert J.G.R."/>
            <person name="Goward M.E."/>
            <person name="Grafham D.V."/>
            <person name="Griffiths M.N.D."/>
            <person name="Hall C."/>
            <person name="Hall R.E."/>
            <person name="Hall-Tamlyn G."/>
            <person name="Heathcott R.W."/>
            <person name="Ho S."/>
            <person name="Holmes S."/>
            <person name="Hunt S.E."/>
            <person name="Jones M.C."/>
            <person name="Kershaw J."/>
            <person name="Kimberley A.M."/>
            <person name="King A."/>
            <person name="Laird G.K."/>
            <person name="Langford C.F."/>
            <person name="Leversha M.A."/>
            <person name="Lloyd C."/>
            <person name="Lloyd D.M."/>
            <person name="Martyn I.D."/>
            <person name="Mashreghi-Mohammadi M."/>
            <person name="Matthews L.H."/>
            <person name="Mccann O.T."/>
            <person name="Mcclay J."/>
            <person name="Mclaren S."/>
            <person name="McMurray A.A."/>
            <person name="Milne S.A."/>
            <person name="Mortimore B.J."/>
            <person name="Odell C.N."/>
            <person name="Pavitt R."/>
            <person name="Pearce A.V."/>
            <person name="Pearson D."/>
            <person name="Phillimore B.J.C.T."/>
            <person name="Phillips S.H."/>
            <person name="Plumb R.W."/>
            <person name="Ramsay H."/>
            <person name="Ramsey Y."/>
            <person name="Rogers L."/>
            <person name="Ross M.T."/>
            <person name="Scott C.E."/>
            <person name="Sehra H.K."/>
            <person name="Skuce C.D."/>
            <person name="Smalley S."/>
            <person name="Smith M.L."/>
            <person name="Soderlund C."/>
            <person name="Spragon L."/>
            <person name="Steward C.A."/>
            <person name="Sulston J.E."/>
            <person name="Swann R.M."/>
            <person name="Vaudin M."/>
            <person name="Wall M."/>
            <person name="Wallis J.M."/>
            <person name="Whiteley M.N."/>
            <person name="Willey D.L."/>
            <person name="Williams L."/>
            <person name="Williams S.A."/>
            <person name="Williamson H."/>
            <person name="Wilmer T.E."/>
            <person name="Wilming L."/>
            <person name="Wright C.L."/>
            <person name="Hubbard T."/>
            <person name="Bentley D.R."/>
            <person name="Beck S."/>
            <person name="Rogers J."/>
            <person name="Shimizu N."/>
            <person name="Minoshima S."/>
            <person name="Kawasaki K."/>
            <person name="Sasaki T."/>
            <person name="Asakawa S."/>
            <person name="Kudoh J."/>
            <person name="Shintani A."/>
            <person name="Shibuya K."/>
            <person name="Yoshizaki Y."/>
            <person name="Aoki N."/>
            <person name="Mitsuyama S."/>
            <person name="Roe B.A."/>
            <person name="Chen F."/>
            <person name="Chu L."/>
            <person name="Crabtree J."/>
            <person name="Deschamps S."/>
            <person name="Do A."/>
            <person name="Do T."/>
            <person name="Dorman A."/>
            <person name="Fang F."/>
            <person name="Fu Y."/>
            <person name="Hu P."/>
            <person name="Hua A."/>
            <person name="Kenton S."/>
            <person name="Lai H."/>
            <person name="Lao H.I."/>
            <person name="Lewis J."/>
            <person name="Lewis S."/>
            <person name="Lin S.-P."/>
            <person name="Loh P."/>
            <person name="Malaj E."/>
            <person name="Nguyen T."/>
            <person name="Pan H."/>
            <person name="Phan S."/>
            <person name="Qi S."/>
            <person name="Qian Y."/>
            <person name="Ray L."/>
            <person name="Ren Q."/>
            <person name="Shaull S."/>
            <person name="Sloan D."/>
            <person name="Song L."/>
            <person name="Wang Q."/>
            <person name="Wang Y."/>
            <person name="Wang Z."/>
            <person name="White J."/>
            <person name="Willingham D."/>
            <person name="Wu H."/>
            <person name="Yao Z."/>
            <person name="Zhan M."/>
            <person name="Zhang G."/>
            <person name="Chissoe S."/>
            <person name="Murray J."/>
            <person name="Miller N."/>
            <person name="Minx P."/>
            <person name="Fulton R."/>
            <person name="Johnson D."/>
            <person name="Bemis G."/>
            <person name="Bentley D."/>
            <person name="Bradshaw H."/>
            <person name="Bourne S."/>
            <person name="Cordes M."/>
            <person name="Du Z."/>
            <person name="Fulton L."/>
            <person name="Goela D."/>
            <person name="Graves T."/>
            <person name="Hawkins J."/>
            <person name="Hinds K."/>
            <person name="Kemp K."/>
            <person name="Latreille P."/>
            <person name="Layman D."/>
            <person name="Ozersky P."/>
            <person name="Rohlfing T."/>
            <person name="Scheet P."/>
            <person name="Walker C."/>
            <person name="Wamsley A."/>
            <person name="Wohldmann P."/>
            <person name="Pepin K."/>
            <person name="Nelson J."/>
            <person name="Korf I."/>
            <person name="Bedell J.A."/>
            <person name="Hillier L.W."/>
            <person name="Mardis E."/>
            <person name="Waterston R."/>
            <person name="Wilson R."/>
            <person name="Emanuel B.S."/>
            <person name="Shaikh T."/>
            <person name="Kurahashi H."/>
            <person name="Saitta S."/>
            <person name="Budarf M.L."/>
            <person name="McDermid H.E."/>
            <person name="Johnson A."/>
            <person name="Wong A.C.C."/>
            <person name="Morrow B.E."/>
            <person name="Edelmann L."/>
            <person name="Kim U.J."/>
            <person name="Shizuya H."/>
            <person name="Simon M.I."/>
            <person name="Dumanski J.P."/>
            <person name="Peyrard M."/>
            <person name="Kedra D."/>
            <person name="Seroussi E."/>
            <person name="Fransson I."/>
            <person name="Tapia I."/>
            <person name="Bruder C.E."/>
            <person name="O'Brien K.P."/>
            <person name="Wilkinson P."/>
            <person name="Bodenteich A."/>
            <person name="Hartman K."/>
            <person name="Hu X."/>
            <person name="Khan A.S."/>
            <person name="Lane L."/>
            <person name="Tilahun Y."/>
            <person name="Wright H."/>
        </authorList>
    </citation>
    <scope>NUCLEOTIDE SEQUENCE [LARGE SCALE GENOMIC DNA]</scope>
</reference>
<reference key="5">
    <citation type="journal article" date="2004" name="Genome Res.">
        <title>The status, quality, and expansion of the NIH full-length cDNA project: the Mammalian Gene Collection (MGC).</title>
        <authorList>
            <consortium name="The MGC Project Team"/>
        </authorList>
    </citation>
    <scope>NUCLEOTIDE SEQUENCE [LARGE SCALE MRNA] (ISOFORM 1)</scope>
    <source>
        <tissue>Brain</tissue>
    </source>
</reference>
<reference key="6">
    <citation type="journal article" date="2011" name="BMC Syst. Biol.">
        <title>Initial characterization of the human central proteome.</title>
        <authorList>
            <person name="Burkard T.R."/>
            <person name="Planyavsky M."/>
            <person name="Kaupe I."/>
            <person name="Breitwieser F.P."/>
            <person name="Buerckstuemmer T."/>
            <person name="Bennett K.L."/>
            <person name="Superti-Furga G."/>
            <person name="Colinge J."/>
        </authorList>
    </citation>
    <scope>IDENTIFICATION BY MASS SPECTROMETRY [LARGE SCALE ANALYSIS]</scope>
</reference>
<reference key="7">
    <citation type="journal article" date="2014" name="Hum. Mol. Genet.">
        <title>IFT27, encoding a small GTPase component of IFT particles, is mutated in a consanguineous family with Bardet-Biedl syndrome.</title>
        <authorList>
            <person name="Aldahmesh M.A."/>
            <person name="Li Y."/>
            <person name="Alhashem A."/>
            <person name="Anazi S."/>
            <person name="Alkuraya H."/>
            <person name="Hashem M."/>
            <person name="Awaji A.A."/>
            <person name="Sogaty S."/>
            <person name="Alkharashi A."/>
            <person name="Alzahrani S."/>
            <person name="Al Hazzaa S.A."/>
            <person name="Xiong Y."/>
            <person name="Kong S."/>
            <person name="Sun Z."/>
            <person name="Alkuraya F.S."/>
        </authorList>
    </citation>
    <scope>INVOLVEMENT IN BBS19</scope>
    <scope>VARIANT BBS19 TYR-100</scope>
    <scope>CHARACTERIZATION OF VARIANT BBS19 TYR-100</scope>
</reference>
<reference key="8">
    <citation type="journal article" date="2014" name="Dev. Cell">
        <title>The intraflagellar transport protein IFT27 promotes BBSome exit from cilia through the GTPase ARL6/BBS3.</title>
        <authorList>
            <person name="Liew G.M."/>
            <person name="Ye F."/>
            <person name="Nager A.R."/>
            <person name="Murphy J.P."/>
            <person name="Lee J.S."/>
            <person name="Aguiar M."/>
            <person name="Breslow D.K."/>
            <person name="Gygi S.P."/>
            <person name="Nachury M.V."/>
        </authorList>
    </citation>
    <scope>FUNCTION</scope>
    <scope>SUBCELLULAR LOCATION</scope>
    <scope>IDENTIFICATION IN THE IFT COMPLEX B</scope>
    <scope>INTERACTION WITH ARL6</scope>
    <scope>MUTAGENESIS OF THR-19 AND LYS-68</scope>
</reference>
<protein>
    <recommendedName>
        <fullName>Intraflagellar transport protein 27 homolog</fullName>
    </recommendedName>
    <alternativeName>
        <fullName>Putative GTP-binding protein RAY-like</fullName>
    </alternativeName>
    <alternativeName>
        <fullName>Rab-like protein 4</fullName>
    </alternativeName>
</protein>
<feature type="chain" id="PRO_0000082715" description="Intraflagellar transport protein 27 homolog">
    <location>
        <begin position="1"/>
        <end position="186"/>
    </location>
</feature>
<feature type="binding site" evidence="1">
    <location>
        <begin position="12"/>
        <end position="19"/>
    </location>
    <ligand>
        <name>GTP</name>
        <dbReference type="ChEBI" id="CHEBI:37565"/>
    </ligand>
</feature>
<feature type="binding site" evidence="1">
    <location>
        <begin position="64"/>
        <end position="68"/>
    </location>
    <ligand>
        <name>GTP</name>
        <dbReference type="ChEBI" id="CHEBI:37565"/>
    </ligand>
</feature>
<feature type="binding site" evidence="1">
    <location>
        <begin position="123"/>
        <end position="126"/>
    </location>
    <ligand>
        <name>GTP</name>
        <dbReference type="ChEBI" id="CHEBI:37565"/>
    </ligand>
</feature>
<feature type="splice variant" id="VSP_021019" description="In isoform 2." evidence="6">
    <location>
        <position position="12"/>
    </location>
</feature>
<feature type="sequence variant" id="VAR_071804" description="In BBS19; loss-of-function mutation; results in significantly reduced protein levels; dbSNP:rs587777546." evidence="4">
    <original>C</original>
    <variation>Y</variation>
    <location>
        <position position="100"/>
    </location>
</feature>
<feature type="mutagenesis site" description="GDP-locked." evidence="5">
    <original>T</original>
    <variation>N</variation>
    <location>
        <position position="19"/>
    </location>
</feature>
<feature type="mutagenesis site" description="GTP-locked." evidence="5">
    <original>K</original>
    <variation>A</variation>
    <location>
        <position position="68"/>
    </location>
</feature>
<keyword id="KW-0025">Alternative splicing</keyword>
<keyword id="KW-0083">Bardet-Biedl syndrome</keyword>
<keyword id="KW-0966">Cell projection</keyword>
<keyword id="KW-1186">Ciliopathy</keyword>
<keyword id="KW-0969">Cilium</keyword>
<keyword id="KW-0963">Cytoplasm</keyword>
<keyword id="KW-0221">Differentiation</keyword>
<keyword id="KW-0225">Disease variant</keyword>
<keyword id="KW-0282">Flagellum</keyword>
<keyword id="KW-0342">GTP-binding</keyword>
<keyword id="KW-0547">Nucleotide-binding</keyword>
<keyword id="KW-0550">Obesity</keyword>
<keyword id="KW-0653">Protein transport</keyword>
<keyword id="KW-1267">Proteomics identification</keyword>
<keyword id="KW-1185">Reference proteome</keyword>
<keyword id="KW-0744">Spermatogenesis</keyword>
<keyword id="KW-0813">Transport</keyword>
<gene>
    <name type="primary">IFT27</name>
    <name type="synonym">RABL4</name>
    <name type="synonym">RAYL</name>
</gene>
<organism>
    <name type="scientific">Homo sapiens</name>
    <name type="common">Human</name>
    <dbReference type="NCBI Taxonomy" id="9606"/>
    <lineage>
        <taxon>Eukaryota</taxon>
        <taxon>Metazoa</taxon>
        <taxon>Chordata</taxon>
        <taxon>Craniata</taxon>
        <taxon>Vertebrata</taxon>
        <taxon>Euteleostomi</taxon>
        <taxon>Mammalia</taxon>
        <taxon>Eutheria</taxon>
        <taxon>Euarchontoglires</taxon>
        <taxon>Primates</taxon>
        <taxon>Haplorrhini</taxon>
        <taxon>Catarrhini</taxon>
        <taxon>Hominidae</taxon>
        <taxon>Homo</taxon>
    </lineage>
</organism>
<name>IFT27_HUMAN</name>
<comment type="function">
    <text evidence="2 5">Small GTPase-like component of the intraflagellar transport (IFT) complex B that promotes the exit of the BBSome complex from cilia via its interaction with ARL6 (PubMed:25443296). Not involved in entry of the BBSome complex into cilium. Prevents aggregation of GTP-free ARL6 (PubMed:25443296). Required for hedgehog signaling. Forms a subcomplex within the IFT complex B with IFT25. Its role in intraflagellar transport is mainly seen in tissues rich in ciliated cells such as kidney and testis. Essential for male fertility, spermiogenesis and sperm flagella formation. Plays a role in the early development of the kidney. May be involved in the regulation of ureteric bud initiation (By similarity).</text>
</comment>
<comment type="subunit">
    <text evidence="3 5">Component of the IFT complex B, at least composed of IFT20, IFT25, IFT27, IFT52, IFT57, IFT74, IFT81, IFT88 and TRAF3IP1 (PubMed:25443296). Interacts with IFT25 (By similarity). Interacts with IFT70B (By similarity). Interacts with RABL2/RABL2A; binding is equal in the presence of GTP or GDP (By similarity). Interacts with ARL6; recognizes and binds with the GTP-free form of ARL6 (PubMed:25443296).</text>
</comment>
<comment type="interaction">
    <interactant intactId="EBI-747093">
        <id>Q9BW83</id>
    </interactant>
    <interactant intactId="EBI-618309">
        <id>Q08379</id>
        <label>GOLGA2</label>
    </interactant>
    <organismsDiffer>false</organismsDiffer>
    <experiments>3</experiments>
</comment>
<comment type="interaction">
    <interactant intactId="EBI-747093">
        <id>Q9BW83</id>
    </interactant>
    <interactant intactId="EBI-747101">
        <id>Q9Y547</id>
        <label>IFT25</label>
    </interactant>
    <organismsDiffer>false</organismsDiffer>
    <experiments>23</experiments>
</comment>
<comment type="subcellular location">
    <subcellularLocation>
        <location evidence="5">Cell projection</location>
        <location evidence="5">Cilium</location>
    </subcellularLocation>
    <subcellularLocation>
        <location evidence="3">Cytoplasm</location>
    </subcellularLocation>
    <subcellularLocation>
        <location evidence="3">Cell projection</location>
        <location evidence="3">Cilium</location>
        <location evidence="3">Flagellum</location>
    </subcellularLocation>
    <text evidence="3">Localizes to the sperm flagellum.</text>
</comment>
<comment type="alternative products">
    <event type="alternative splicing"/>
    <isoform>
        <id>Q9BW83-1</id>
        <name>1</name>
        <sequence type="displayed"/>
    </isoform>
    <isoform>
        <id>Q9BW83-2</id>
        <name>2</name>
        <sequence type="described" ref="VSP_021019"/>
    </isoform>
</comment>
<comment type="disease" evidence="4">
    <disease id="DI-04162">
        <name>Bardet-Biedl syndrome 19</name>
        <acronym>BBS19</acronym>
        <description>A syndrome characterized by usually severe pigmentary retinopathy, early-onset obesity, polydactyly, hypogenitalism, renal malformation and intellectual disability. Secondary features include diabetes mellitus, hypertension and congenital heart disease. Bardet-Biedl syndrome inheritance is autosomal recessive, but three mutated alleles (two at one locus, and a third at a second locus) may be required for clinical manifestation of some forms of the disease.</description>
        <dbReference type="MIM" id="615996"/>
    </disease>
    <text>The disease is caused by variants affecting the gene represented in this entry.</text>
</comment>
<comment type="similarity">
    <text evidence="7">Belongs to the small GTPase superfamily. Rab family.</text>
</comment>
<evidence type="ECO:0000250" key="1"/>
<evidence type="ECO:0000250" key="2">
    <source>
        <dbReference type="UniProtKB" id="A8HN58"/>
    </source>
</evidence>
<evidence type="ECO:0000250" key="3">
    <source>
        <dbReference type="UniProtKB" id="Q9D0P8"/>
    </source>
</evidence>
<evidence type="ECO:0000269" key="4">
    <source>
    </source>
</evidence>
<evidence type="ECO:0000269" key="5">
    <source>
    </source>
</evidence>
<evidence type="ECO:0000303" key="6">
    <source>
    </source>
</evidence>
<evidence type="ECO:0000305" key="7"/>
<sequence length="186" mass="20480">MVKLAAKCILAGDPAVGKTALAQIFRSDGAHFQKSYTLTTGMDLVVKTVPVPDTGDSVELFIFDSAGKELFSEMLDKLWESPNVLCLVYDVTNEESFNNCSKWLEKARSQAPGISLPGVLVGNKTDLAGRRAVDSAEARAWALGQGLECFETSVKEMENFEAPFHCLAKQFHQLYREKVEVFRALA</sequence>
<accession>Q9BW83</accession>
<accession>O60897</accession>
<dbReference type="EMBL" id="AL022729">
    <property type="protein sequence ID" value="CAA18787.1"/>
    <property type="molecule type" value="mRNA"/>
</dbReference>
<dbReference type="EMBL" id="CR456558">
    <property type="protein sequence ID" value="CAG30444.1"/>
    <property type="molecule type" value="mRNA"/>
</dbReference>
<dbReference type="EMBL" id="BT006815">
    <property type="protein sequence ID" value="AAP35461.1"/>
    <property type="molecule type" value="mRNA"/>
</dbReference>
<dbReference type="EMBL" id="Z80897">
    <property type="status" value="NOT_ANNOTATED_CDS"/>
    <property type="molecule type" value="Genomic_DNA"/>
</dbReference>
<dbReference type="EMBL" id="BC000566">
    <property type="protein sequence ID" value="AAH00566.1"/>
    <property type="molecule type" value="mRNA"/>
</dbReference>
<dbReference type="CCDS" id="CCDS13932.1">
    <molecule id="Q9BW83-2"/>
</dbReference>
<dbReference type="CCDS" id="CCDS54523.1">
    <molecule id="Q9BW83-1"/>
</dbReference>
<dbReference type="RefSeq" id="NP_001171172.1">
    <molecule id="Q9BW83-1"/>
    <property type="nucleotide sequence ID" value="NM_001177701.3"/>
</dbReference>
<dbReference type="RefSeq" id="NP_001349932.1">
    <molecule id="Q9BW83-1"/>
    <property type="nucleotide sequence ID" value="NM_001363003.2"/>
</dbReference>
<dbReference type="RefSeq" id="NP_006851.1">
    <molecule id="Q9BW83-2"/>
    <property type="nucleotide sequence ID" value="NM_006860.5"/>
</dbReference>
<dbReference type="RefSeq" id="XP_006724169.1">
    <property type="nucleotide sequence ID" value="XM_006724106.2"/>
</dbReference>
<dbReference type="SMR" id="Q9BW83"/>
<dbReference type="BioGRID" id="116210">
    <property type="interactions" value="47"/>
</dbReference>
<dbReference type="ComplexPortal" id="CPX-5022">
    <property type="entry name" value="Intraflagellar transport complex B"/>
</dbReference>
<dbReference type="CORUM" id="Q9BW83"/>
<dbReference type="FunCoup" id="Q9BW83">
    <property type="interactions" value="736"/>
</dbReference>
<dbReference type="IntAct" id="Q9BW83">
    <property type="interactions" value="60"/>
</dbReference>
<dbReference type="STRING" id="9606.ENSP00000393541"/>
<dbReference type="TCDB" id="1.X.1.1.1">
    <property type="family name" value="the intraflagellar transporter-a complex (ift-a) family"/>
</dbReference>
<dbReference type="GlyGen" id="Q9BW83">
    <property type="glycosylation" value="1 site, 1 O-linked glycan (1 site)"/>
</dbReference>
<dbReference type="iPTMnet" id="Q9BW83"/>
<dbReference type="MetOSite" id="Q9BW83"/>
<dbReference type="PhosphoSitePlus" id="Q9BW83"/>
<dbReference type="BioMuta" id="IFT27"/>
<dbReference type="DMDM" id="20178058"/>
<dbReference type="jPOST" id="Q9BW83"/>
<dbReference type="MassIVE" id="Q9BW83"/>
<dbReference type="PaxDb" id="9606-ENSP00000393541"/>
<dbReference type="PeptideAtlas" id="Q9BW83"/>
<dbReference type="ProteomicsDB" id="79261">
    <molecule id="Q9BW83-1"/>
</dbReference>
<dbReference type="ProteomicsDB" id="79262">
    <molecule id="Q9BW83-2"/>
</dbReference>
<dbReference type="Pumba" id="Q9BW83"/>
<dbReference type="Antibodypedia" id="11783">
    <property type="antibodies" value="119 antibodies from 23 providers"/>
</dbReference>
<dbReference type="DNASU" id="11020"/>
<dbReference type="Ensembl" id="ENST00000340630.9">
    <molecule id="Q9BW83-2"/>
    <property type="protein sequence ID" value="ENSP00000343593.5"/>
    <property type="gene ID" value="ENSG00000100360.15"/>
</dbReference>
<dbReference type="Ensembl" id="ENST00000433985.7">
    <molecule id="Q9BW83-1"/>
    <property type="protein sequence ID" value="ENSP00000393541.2"/>
    <property type="gene ID" value="ENSG00000100360.15"/>
</dbReference>
<dbReference type="GeneID" id="11020"/>
<dbReference type="KEGG" id="hsa:11020"/>
<dbReference type="MANE-Select" id="ENST00000433985.7">
    <property type="protein sequence ID" value="ENSP00000393541.2"/>
    <property type="RefSeq nucleotide sequence ID" value="NM_001177701.3"/>
    <property type="RefSeq protein sequence ID" value="NP_001171172.1"/>
</dbReference>
<dbReference type="UCSC" id="uc003apu.4">
    <molecule id="Q9BW83-1"/>
    <property type="organism name" value="human"/>
</dbReference>
<dbReference type="AGR" id="HGNC:18626"/>
<dbReference type="CTD" id="11020"/>
<dbReference type="DisGeNET" id="11020"/>
<dbReference type="GeneCards" id="IFT27"/>
<dbReference type="GeneReviews" id="IFT27"/>
<dbReference type="HGNC" id="HGNC:18626">
    <property type="gene designation" value="IFT27"/>
</dbReference>
<dbReference type="HPA" id="ENSG00000100360">
    <property type="expression patterns" value="Low tissue specificity"/>
</dbReference>
<dbReference type="MalaCards" id="IFT27"/>
<dbReference type="MIM" id="615870">
    <property type="type" value="gene"/>
</dbReference>
<dbReference type="MIM" id="615996">
    <property type="type" value="phenotype"/>
</dbReference>
<dbReference type="neXtProt" id="NX_Q9BW83"/>
<dbReference type="OpenTargets" id="ENSG00000100360"/>
<dbReference type="Orphanet" id="110">
    <property type="disease" value="Bardet-Biedl syndrome"/>
</dbReference>
<dbReference type="PharmGKB" id="PA38609"/>
<dbReference type="VEuPathDB" id="HostDB:ENSG00000100360"/>
<dbReference type="eggNOG" id="KOG0079">
    <property type="taxonomic scope" value="Eukaryota"/>
</dbReference>
<dbReference type="GeneTree" id="ENSGT00870000136549"/>
<dbReference type="HOGENOM" id="CLU_041217_10_6_1"/>
<dbReference type="InParanoid" id="Q9BW83"/>
<dbReference type="OMA" id="KMWGQPS"/>
<dbReference type="OrthoDB" id="265044at2759"/>
<dbReference type="PAN-GO" id="Q9BW83">
    <property type="GO annotations" value="8 GO annotations based on evolutionary models"/>
</dbReference>
<dbReference type="PhylomeDB" id="Q9BW83"/>
<dbReference type="TreeFam" id="TF329292"/>
<dbReference type="PathwayCommons" id="Q9BW83"/>
<dbReference type="Reactome" id="R-HSA-5620924">
    <property type="pathway name" value="Intraflagellar transport"/>
</dbReference>
<dbReference type="SignaLink" id="Q9BW83"/>
<dbReference type="BioGRID-ORCS" id="11020">
    <property type="hits" value="9 hits in 1146 CRISPR screens"/>
</dbReference>
<dbReference type="ChiTaRS" id="IFT27">
    <property type="organism name" value="human"/>
</dbReference>
<dbReference type="GenomeRNAi" id="11020"/>
<dbReference type="Pharos" id="Q9BW83">
    <property type="development level" value="Tbio"/>
</dbReference>
<dbReference type="PRO" id="PR:Q9BW83"/>
<dbReference type="Proteomes" id="UP000005640">
    <property type="component" value="Chromosome 22"/>
</dbReference>
<dbReference type="RNAct" id="Q9BW83">
    <property type="molecule type" value="protein"/>
</dbReference>
<dbReference type="Bgee" id="ENSG00000100360">
    <property type="expression patterns" value="Expressed in right uterine tube and 173 other cell types or tissues"/>
</dbReference>
<dbReference type="ExpressionAtlas" id="Q9BW83">
    <property type="expression patterns" value="baseline and differential"/>
</dbReference>
<dbReference type="GO" id="GO:0005813">
    <property type="term" value="C:centrosome"/>
    <property type="evidence" value="ECO:0007669"/>
    <property type="project" value="Ensembl"/>
</dbReference>
<dbReference type="GO" id="GO:0097542">
    <property type="term" value="C:ciliary tip"/>
    <property type="evidence" value="ECO:0000304"/>
    <property type="project" value="Reactome"/>
</dbReference>
<dbReference type="GO" id="GO:0005929">
    <property type="term" value="C:cilium"/>
    <property type="evidence" value="ECO:0000314"/>
    <property type="project" value="UniProtKB"/>
</dbReference>
<dbReference type="GO" id="GO:0005737">
    <property type="term" value="C:cytoplasm"/>
    <property type="evidence" value="ECO:0000250"/>
    <property type="project" value="UniProtKB"/>
</dbReference>
<dbReference type="GO" id="GO:0005794">
    <property type="term" value="C:Golgi apparatus"/>
    <property type="evidence" value="ECO:0000318"/>
    <property type="project" value="GO_Central"/>
</dbReference>
<dbReference type="GO" id="GO:0000139">
    <property type="term" value="C:Golgi membrane"/>
    <property type="evidence" value="ECO:0000318"/>
    <property type="project" value="GO_Central"/>
</dbReference>
<dbReference type="GO" id="GO:0030992">
    <property type="term" value="C:intraciliary transport particle B"/>
    <property type="evidence" value="ECO:0000314"/>
    <property type="project" value="UniProtKB"/>
</dbReference>
<dbReference type="GO" id="GO:0031514">
    <property type="term" value="C:motile cilium"/>
    <property type="evidence" value="ECO:0000250"/>
    <property type="project" value="BHF-UCL"/>
</dbReference>
<dbReference type="GO" id="GO:0005634">
    <property type="term" value="C:nucleus"/>
    <property type="evidence" value="ECO:0007669"/>
    <property type="project" value="Ensembl"/>
</dbReference>
<dbReference type="GO" id="GO:0036126">
    <property type="term" value="C:sperm flagellum"/>
    <property type="evidence" value="ECO:0000250"/>
    <property type="project" value="UniProtKB"/>
</dbReference>
<dbReference type="GO" id="GO:0097225">
    <property type="term" value="C:sperm midpiece"/>
    <property type="evidence" value="ECO:0007669"/>
    <property type="project" value="Ensembl"/>
</dbReference>
<dbReference type="GO" id="GO:0097228">
    <property type="term" value="C:sperm principal piece"/>
    <property type="evidence" value="ECO:0007669"/>
    <property type="project" value="Ensembl"/>
</dbReference>
<dbReference type="GO" id="GO:0005525">
    <property type="term" value="F:GTP binding"/>
    <property type="evidence" value="ECO:0000318"/>
    <property type="project" value="GO_Central"/>
</dbReference>
<dbReference type="GO" id="GO:0003924">
    <property type="term" value="F:GTPase activity"/>
    <property type="evidence" value="ECO:0000318"/>
    <property type="project" value="GO_Central"/>
</dbReference>
<dbReference type="GO" id="GO:0060271">
    <property type="term" value="P:cilium assembly"/>
    <property type="evidence" value="ECO:0000303"/>
    <property type="project" value="ComplexPortal"/>
</dbReference>
<dbReference type="GO" id="GO:0090102">
    <property type="term" value="P:cochlea development"/>
    <property type="evidence" value="ECO:0007669"/>
    <property type="project" value="Ensembl"/>
</dbReference>
<dbReference type="GO" id="GO:0060122">
    <property type="term" value="P:inner ear receptor cell stereocilium organization"/>
    <property type="evidence" value="ECO:0007669"/>
    <property type="project" value="Ensembl"/>
</dbReference>
<dbReference type="GO" id="GO:0006886">
    <property type="term" value="P:intracellular protein transport"/>
    <property type="evidence" value="ECO:0000315"/>
    <property type="project" value="UniProtKB"/>
</dbReference>
<dbReference type="GO" id="GO:0035720">
    <property type="term" value="P:intraciliary anterograde transport"/>
    <property type="evidence" value="ECO:0000303"/>
    <property type="project" value="ComplexPortal"/>
</dbReference>
<dbReference type="GO" id="GO:0042073">
    <property type="term" value="P:intraciliary transport"/>
    <property type="evidence" value="ECO:0000315"/>
    <property type="project" value="UniProtKB"/>
</dbReference>
<dbReference type="GO" id="GO:0001822">
    <property type="term" value="P:kidney development"/>
    <property type="evidence" value="ECO:0000250"/>
    <property type="project" value="UniProtKB"/>
</dbReference>
<dbReference type="GO" id="GO:0007224">
    <property type="term" value="P:smoothened signaling pathway"/>
    <property type="evidence" value="ECO:0000250"/>
    <property type="project" value="UniProtKB"/>
</dbReference>
<dbReference type="GO" id="GO:0007283">
    <property type="term" value="P:spermatogenesis"/>
    <property type="evidence" value="ECO:0000250"/>
    <property type="project" value="UniProtKB"/>
</dbReference>
<dbReference type="GO" id="GO:0016192">
    <property type="term" value="P:vesicle-mediated transport"/>
    <property type="evidence" value="ECO:0000318"/>
    <property type="project" value="GO_Central"/>
</dbReference>
<dbReference type="CDD" id="cd04101">
    <property type="entry name" value="RabL4"/>
    <property type="match status" value="1"/>
</dbReference>
<dbReference type="FunFam" id="3.40.50.300:FF:001095">
    <property type="entry name" value="Intraflagellar transport protein 27 homolog"/>
    <property type="match status" value="1"/>
</dbReference>
<dbReference type="Gene3D" id="3.40.50.300">
    <property type="entry name" value="P-loop containing nucleotide triphosphate hydrolases"/>
    <property type="match status" value="1"/>
</dbReference>
<dbReference type="InterPro" id="IPR027417">
    <property type="entry name" value="P-loop_NTPase"/>
</dbReference>
<dbReference type="InterPro" id="IPR050209">
    <property type="entry name" value="Rab_GTPases_membrane_traffic"/>
</dbReference>
<dbReference type="InterPro" id="IPR034112">
    <property type="entry name" value="RabL4_euk"/>
</dbReference>
<dbReference type="InterPro" id="IPR005225">
    <property type="entry name" value="Small_GTP-bd"/>
</dbReference>
<dbReference type="InterPro" id="IPR001806">
    <property type="entry name" value="Small_GTPase"/>
</dbReference>
<dbReference type="NCBIfam" id="TIGR00231">
    <property type="entry name" value="small_GTP"/>
    <property type="match status" value="1"/>
</dbReference>
<dbReference type="PANTHER" id="PTHR47979">
    <property type="entry name" value="DRAB11-RELATED"/>
    <property type="match status" value="1"/>
</dbReference>
<dbReference type="Pfam" id="PF00071">
    <property type="entry name" value="Ras"/>
    <property type="match status" value="1"/>
</dbReference>
<dbReference type="PRINTS" id="PR00449">
    <property type="entry name" value="RASTRNSFRMNG"/>
</dbReference>
<dbReference type="SMART" id="SM00175">
    <property type="entry name" value="RAB"/>
    <property type="match status" value="1"/>
</dbReference>
<dbReference type="SMART" id="SM00173">
    <property type="entry name" value="RAS"/>
    <property type="match status" value="1"/>
</dbReference>
<dbReference type="SMART" id="SM00174">
    <property type="entry name" value="RHO"/>
    <property type="match status" value="1"/>
</dbReference>
<dbReference type="SUPFAM" id="SSF52540">
    <property type="entry name" value="P-loop containing nucleoside triphosphate hydrolases"/>
    <property type="match status" value="1"/>
</dbReference>
<dbReference type="PROSITE" id="PS51419">
    <property type="entry name" value="RAB"/>
    <property type="match status" value="1"/>
</dbReference>